<accession>C9X4J0</accession>
<protein>
    <recommendedName>
        <fullName evidence="4">Bradykinin-potentiating peptide</fullName>
        <shortName evidence="4">BPP</shortName>
        <shortName evidence="4">TdBPP</shortName>
    </recommendedName>
</protein>
<dbReference type="EMBL" id="FN392268">
    <property type="protein sequence ID" value="CAY61908.1"/>
    <property type="molecule type" value="mRNA"/>
</dbReference>
<dbReference type="SMR" id="C9X4J0"/>
<dbReference type="GO" id="GO:0005576">
    <property type="term" value="C:extracellular region"/>
    <property type="evidence" value="ECO:0007669"/>
    <property type="project" value="UniProtKB-SubCell"/>
</dbReference>
<dbReference type="GO" id="GO:0008217">
    <property type="term" value="P:regulation of blood pressure"/>
    <property type="evidence" value="ECO:0007669"/>
    <property type="project" value="UniProtKB-KW"/>
</dbReference>
<organism>
    <name type="scientific">Tityus discrepans</name>
    <name type="common">Venezuelan scorpion</name>
    <dbReference type="NCBI Taxonomy" id="57059"/>
    <lineage>
        <taxon>Eukaryota</taxon>
        <taxon>Metazoa</taxon>
        <taxon>Ecdysozoa</taxon>
        <taxon>Arthropoda</taxon>
        <taxon>Chelicerata</taxon>
        <taxon>Arachnida</taxon>
        <taxon>Scorpiones</taxon>
        <taxon>Buthida</taxon>
        <taxon>Buthoidea</taxon>
        <taxon>Buthidae</taxon>
        <taxon>Tityus</taxon>
    </lineage>
</organism>
<name>NDB2_TITDI</name>
<keyword id="KW-0929">Antimicrobial</keyword>
<keyword id="KW-0165">Cleavage on pair of basic residues</keyword>
<keyword id="KW-0382">Hypotensive agent</keyword>
<keyword id="KW-0964">Secreted</keyword>
<keyword id="KW-0732">Signal</keyword>
<sequence>MNKKTLLVIFIVTLLIADEVNSFKFGGFLKKMWKSKLAKKLRAKGKQMLKEYANKVLSPEEEAPAAVPAGAPERRRR</sequence>
<proteinExistence type="inferred from homology"/>
<feature type="signal peptide" evidence="3">
    <location>
        <begin position="1"/>
        <end position="22"/>
    </location>
</feature>
<feature type="peptide" id="PRO_5000525357" description="Bradykinin-potentiating peptide">
    <location>
        <begin position="23"/>
        <end position="73"/>
    </location>
</feature>
<feature type="propeptide" id="PRO_0000393387" evidence="1">
    <location>
        <begin position="74"/>
        <end position="77"/>
    </location>
</feature>
<comment type="function">
    <text evidence="2 6">Antimicrobial peptide (By similarity). May also inhibit angiotensin-converting enzyme (ACE) and potentiate bradykinin (BK) (Probable).</text>
</comment>
<comment type="subcellular location">
    <subcellularLocation>
        <location evidence="6">Secreted</location>
    </subcellularLocation>
</comment>
<comment type="tissue specificity">
    <text evidence="6">Expressed by the venom gland.</text>
</comment>
<comment type="similarity">
    <text evidence="5">Belongs to the non-disulfide-bridged peptide (NDBP) superfamily. Long chain multifunctional peptide (group 2) family.</text>
</comment>
<reference key="1">
    <citation type="journal article" date="2009" name="Biochimie">
        <title>Molecular cloning and nucleotide sequence analysis of genes from a cDNA library of the scorpion Tityus discrepans.</title>
        <authorList>
            <person name="D'Suze G."/>
            <person name="Schwartz E.F."/>
            <person name="Garcia-Gomez B.I."/>
            <person name="Sevcik C."/>
            <person name="Possani L.D."/>
        </authorList>
    </citation>
    <scope>NUCLEOTIDE SEQUENCE [MRNA]</scope>
    <source>
        <tissue>Venom gland</tissue>
    </source>
</reference>
<evidence type="ECO:0000250" key="1"/>
<evidence type="ECO:0000250" key="2">
    <source>
        <dbReference type="UniProtKB" id="P86407"/>
    </source>
</evidence>
<evidence type="ECO:0000255" key="3"/>
<evidence type="ECO:0000303" key="4">
    <source>
    </source>
</evidence>
<evidence type="ECO:0000305" key="5"/>
<evidence type="ECO:0000305" key="6">
    <source>
    </source>
</evidence>